<sequence length="727" mass="80056">MGRRAKMVEQVVSLMETHDQIRNIGICAHIDHGKTTLSDNLLAGAGMISKDLAGDQLALDFDEEEAERGITIYAANVSMVHECQGKPHLINLIDTPGHVDFGGDVTRAMRAIDGAVVVVCAVEGIMPQTETVLRQALKEKVKPILFINKVDRLLNELKLTPEELQNRFMKIIADVNKLIEKMSPEEFKGKWVVNVMDGSVAFGSAYHNWAISVPYMQKTKITFKDIIDYCEAENQKELAEKAPLHAVLLDMVVTHLPNPVEAQKYRIPNIWKGDLESEIGKAMVNCDPNGPMAGVVTKIIMDKHAGAISACRLFSGRIKQGDELRLVSIKAKARAQQVAVFMGAERVQVPSVSAGNICALTGLKEASAGETVCSPNTILDPSFESITHVSEPVITVAIEAKNTKDLPKLIDVLRQIAKEDNTVRVEINEETGEHLISGMGELHIEVITNTKIGRDAGVEVDVGEPIVVYREAVNGVSPEVEGKSPNKHNRLYFVAEPLDECVYNAHVEGLIKDEDFKKKTPKEVETKLVEIGMNREEAKRVMTIYEGNVLLNMTRGIVQLDEARELIIEGFKEAVKNGPLAAEKCQGVKVKLMDAVFHEDAIHRGPAQLIPAVRTGVRDAIAQANVGLLEPIQNVYISTPQDYMGDAMKELSNRRGQILDMEQEGDMTTIKSKAPVSEMFGFAGAIRGATQGRCLWSIEFGGFEKVPTELQPQIVKEIRTRKGLKTD</sequence>
<evidence type="ECO:0000255" key="1">
    <source>
        <dbReference type="HAMAP-Rule" id="MF_00054"/>
    </source>
</evidence>
<name>EF2_META3</name>
<dbReference type="EMBL" id="CP000743">
    <property type="protein sequence ID" value="ABR56366.1"/>
    <property type="molecule type" value="Genomic_DNA"/>
</dbReference>
<dbReference type="RefSeq" id="WP_011973498.1">
    <property type="nucleotide sequence ID" value="NC_009635.1"/>
</dbReference>
<dbReference type="SMR" id="A6UV44"/>
<dbReference type="STRING" id="419665.Maeo_0783"/>
<dbReference type="GeneID" id="5327228"/>
<dbReference type="KEGG" id="mae:Maeo_0783"/>
<dbReference type="eggNOG" id="arCOG01559">
    <property type="taxonomic scope" value="Archaea"/>
</dbReference>
<dbReference type="HOGENOM" id="CLU_002794_11_1_2"/>
<dbReference type="OrthoDB" id="6290at2157"/>
<dbReference type="Proteomes" id="UP000001106">
    <property type="component" value="Chromosome"/>
</dbReference>
<dbReference type="GO" id="GO:0005829">
    <property type="term" value="C:cytosol"/>
    <property type="evidence" value="ECO:0007669"/>
    <property type="project" value="TreeGrafter"/>
</dbReference>
<dbReference type="GO" id="GO:1990904">
    <property type="term" value="C:ribonucleoprotein complex"/>
    <property type="evidence" value="ECO:0007669"/>
    <property type="project" value="TreeGrafter"/>
</dbReference>
<dbReference type="GO" id="GO:0005525">
    <property type="term" value="F:GTP binding"/>
    <property type="evidence" value="ECO:0007669"/>
    <property type="project" value="UniProtKB-UniRule"/>
</dbReference>
<dbReference type="GO" id="GO:0003924">
    <property type="term" value="F:GTPase activity"/>
    <property type="evidence" value="ECO:0007669"/>
    <property type="project" value="InterPro"/>
</dbReference>
<dbReference type="GO" id="GO:0003746">
    <property type="term" value="F:translation elongation factor activity"/>
    <property type="evidence" value="ECO:0007669"/>
    <property type="project" value="UniProtKB-UniRule"/>
</dbReference>
<dbReference type="CDD" id="cd01681">
    <property type="entry name" value="aeEF2_snRNP_like_IV"/>
    <property type="match status" value="1"/>
</dbReference>
<dbReference type="CDD" id="cd01885">
    <property type="entry name" value="EF2"/>
    <property type="match status" value="1"/>
</dbReference>
<dbReference type="CDD" id="cd16268">
    <property type="entry name" value="EF2_II"/>
    <property type="match status" value="1"/>
</dbReference>
<dbReference type="CDD" id="cd16261">
    <property type="entry name" value="EF2_snRNP_III"/>
    <property type="match status" value="1"/>
</dbReference>
<dbReference type="CDD" id="cd03713">
    <property type="entry name" value="EFG_mtEFG_C"/>
    <property type="match status" value="1"/>
</dbReference>
<dbReference type="FunFam" id="3.40.50.300:FF:000684">
    <property type="entry name" value="Elongation factor 2"/>
    <property type="match status" value="1"/>
</dbReference>
<dbReference type="FunFam" id="3.30.70.240:FF:000001">
    <property type="entry name" value="Elongation factor G"/>
    <property type="match status" value="1"/>
</dbReference>
<dbReference type="FunFam" id="3.30.70.870:FF:000002">
    <property type="entry name" value="Translation elongation factor 2"/>
    <property type="match status" value="1"/>
</dbReference>
<dbReference type="Gene3D" id="3.30.230.10">
    <property type="match status" value="1"/>
</dbReference>
<dbReference type="Gene3D" id="3.30.70.240">
    <property type="match status" value="1"/>
</dbReference>
<dbReference type="Gene3D" id="3.30.70.870">
    <property type="entry name" value="Elongation Factor G (Translational Gtpase), domain 3"/>
    <property type="match status" value="1"/>
</dbReference>
<dbReference type="Gene3D" id="3.40.50.300">
    <property type="entry name" value="P-loop containing nucleotide triphosphate hydrolases"/>
    <property type="match status" value="1"/>
</dbReference>
<dbReference type="Gene3D" id="2.40.30.10">
    <property type="entry name" value="Translation factors"/>
    <property type="match status" value="1"/>
</dbReference>
<dbReference type="HAMAP" id="MF_00054_A">
    <property type="entry name" value="EF_G_EF_2_A"/>
    <property type="match status" value="1"/>
</dbReference>
<dbReference type="InterPro" id="IPR053905">
    <property type="entry name" value="EF-G-like_DII"/>
</dbReference>
<dbReference type="InterPro" id="IPR041095">
    <property type="entry name" value="EFG_II"/>
</dbReference>
<dbReference type="InterPro" id="IPR035647">
    <property type="entry name" value="EFG_III/V"/>
</dbReference>
<dbReference type="InterPro" id="IPR035649">
    <property type="entry name" value="EFG_V"/>
</dbReference>
<dbReference type="InterPro" id="IPR000640">
    <property type="entry name" value="EFG_V-like"/>
</dbReference>
<dbReference type="InterPro" id="IPR031157">
    <property type="entry name" value="G_TR_CS"/>
</dbReference>
<dbReference type="InterPro" id="IPR027417">
    <property type="entry name" value="P-loop_NTPase"/>
</dbReference>
<dbReference type="InterPro" id="IPR020568">
    <property type="entry name" value="Ribosomal_Su5_D2-typ_SF"/>
</dbReference>
<dbReference type="InterPro" id="IPR014721">
    <property type="entry name" value="Ribsml_uS5_D2-typ_fold_subgr"/>
</dbReference>
<dbReference type="InterPro" id="IPR005225">
    <property type="entry name" value="Small_GTP-bd"/>
</dbReference>
<dbReference type="InterPro" id="IPR000795">
    <property type="entry name" value="T_Tr_GTP-bd_dom"/>
</dbReference>
<dbReference type="InterPro" id="IPR009000">
    <property type="entry name" value="Transl_B-barrel_sf"/>
</dbReference>
<dbReference type="InterPro" id="IPR004543">
    <property type="entry name" value="Transl_elong_EFG/EF2_arc"/>
</dbReference>
<dbReference type="InterPro" id="IPR005517">
    <property type="entry name" value="Transl_elong_EFG/EF2_IV"/>
</dbReference>
<dbReference type="NCBIfam" id="TIGR00490">
    <property type="entry name" value="aEF-2"/>
    <property type="match status" value="1"/>
</dbReference>
<dbReference type="NCBIfam" id="TIGR00231">
    <property type="entry name" value="small_GTP"/>
    <property type="match status" value="1"/>
</dbReference>
<dbReference type="PANTHER" id="PTHR42908:SF3">
    <property type="entry name" value="ELONGATION FACTOR-LIKE GTPASE 1"/>
    <property type="match status" value="1"/>
</dbReference>
<dbReference type="PANTHER" id="PTHR42908">
    <property type="entry name" value="TRANSLATION ELONGATION FACTOR-RELATED"/>
    <property type="match status" value="1"/>
</dbReference>
<dbReference type="Pfam" id="PF22042">
    <property type="entry name" value="EF-G_D2"/>
    <property type="match status" value="1"/>
</dbReference>
<dbReference type="Pfam" id="PF00679">
    <property type="entry name" value="EFG_C"/>
    <property type="match status" value="1"/>
</dbReference>
<dbReference type="Pfam" id="PF14492">
    <property type="entry name" value="EFG_III"/>
    <property type="match status" value="1"/>
</dbReference>
<dbReference type="Pfam" id="PF03764">
    <property type="entry name" value="EFG_IV"/>
    <property type="match status" value="1"/>
</dbReference>
<dbReference type="Pfam" id="PF00009">
    <property type="entry name" value="GTP_EFTU"/>
    <property type="match status" value="1"/>
</dbReference>
<dbReference type="PRINTS" id="PR00315">
    <property type="entry name" value="ELONGATNFCT"/>
</dbReference>
<dbReference type="SMART" id="SM00838">
    <property type="entry name" value="EFG_C"/>
    <property type="match status" value="1"/>
</dbReference>
<dbReference type="SMART" id="SM00889">
    <property type="entry name" value="EFG_IV"/>
    <property type="match status" value="1"/>
</dbReference>
<dbReference type="SUPFAM" id="SSF54980">
    <property type="entry name" value="EF-G C-terminal domain-like"/>
    <property type="match status" value="2"/>
</dbReference>
<dbReference type="SUPFAM" id="SSF52540">
    <property type="entry name" value="P-loop containing nucleoside triphosphate hydrolases"/>
    <property type="match status" value="1"/>
</dbReference>
<dbReference type="SUPFAM" id="SSF54211">
    <property type="entry name" value="Ribosomal protein S5 domain 2-like"/>
    <property type="match status" value="1"/>
</dbReference>
<dbReference type="SUPFAM" id="SSF50447">
    <property type="entry name" value="Translation proteins"/>
    <property type="match status" value="1"/>
</dbReference>
<dbReference type="PROSITE" id="PS00301">
    <property type="entry name" value="G_TR_1"/>
    <property type="match status" value="1"/>
</dbReference>
<dbReference type="PROSITE" id="PS51722">
    <property type="entry name" value="G_TR_2"/>
    <property type="match status" value="1"/>
</dbReference>
<proteinExistence type="inferred from homology"/>
<feature type="chain" id="PRO_1000008844" description="Elongation factor 2">
    <location>
        <begin position="1"/>
        <end position="727"/>
    </location>
</feature>
<feature type="domain" description="tr-type G">
    <location>
        <begin position="19"/>
        <end position="260"/>
    </location>
</feature>
<feature type="binding site" evidence="1">
    <location>
        <begin position="28"/>
        <end position="35"/>
    </location>
    <ligand>
        <name>GTP</name>
        <dbReference type="ChEBI" id="CHEBI:37565"/>
    </ligand>
</feature>
<feature type="binding site" evidence="1">
    <location>
        <begin position="94"/>
        <end position="98"/>
    </location>
    <ligand>
        <name>GTP</name>
        <dbReference type="ChEBI" id="CHEBI:37565"/>
    </ligand>
</feature>
<feature type="binding site" evidence="1">
    <location>
        <begin position="148"/>
        <end position="151"/>
    </location>
    <ligand>
        <name>GTP</name>
        <dbReference type="ChEBI" id="CHEBI:37565"/>
    </ligand>
</feature>
<feature type="modified residue" description="Diphthamide" evidence="1">
    <location>
        <position position="603"/>
    </location>
</feature>
<accession>A6UV44</accession>
<comment type="function">
    <text evidence="1">Catalyzes the GTP-dependent ribosomal translocation step during translation elongation. During this step, the ribosome changes from the pre-translocational (PRE) to the post-translocational (POST) state as the newly formed A-site-bound peptidyl-tRNA and P-site-bound deacylated tRNA move to the P and E sites, respectively. Catalyzes the coordinated movement of the two tRNA molecules, the mRNA and conformational changes in the ribosome.</text>
</comment>
<comment type="subcellular location">
    <subcellularLocation>
        <location evidence="1">Cytoplasm</location>
    </subcellularLocation>
</comment>
<comment type="similarity">
    <text evidence="1">Belongs to the TRAFAC class translation factor GTPase superfamily. Classic translation factor GTPase family. EF-G/EF-2 subfamily.</text>
</comment>
<gene>
    <name evidence="1" type="primary">fusA</name>
    <name type="ordered locus">Maeo_0783</name>
</gene>
<keyword id="KW-0963">Cytoplasm</keyword>
<keyword id="KW-0251">Elongation factor</keyword>
<keyword id="KW-0342">GTP-binding</keyword>
<keyword id="KW-0547">Nucleotide-binding</keyword>
<keyword id="KW-0648">Protein biosynthesis</keyword>
<organism>
    <name type="scientific">Methanococcus aeolicus (strain ATCC BAA-1280 / DSM 17508 / OCM 812 / Nankai-3)</name>
    <dbReference type="NCBI Taxonomy" id="419665"/>
    <lineage>
        <taxon>Archaea</taxon>
        <taxon>Methanobacteriati</taxon>
        <taxon>Methanobacteriota</taxon>
        <taxon>Methanomada group</taxon>
        <taxon>Methanococci</taxon>
        <taxon>Methanococcales</taxon>
        <taxon>Methanococcaceae</taxon>
        <taxon>Methanococcus</taxon>
    </lineage>
</organism>
<reference key="1">
    <citation type="submission" date="2007-06" db="EMBL/GenBank/DDBJ databases">
        <title>Complete sequence of Methanococcus aeolicus Nankai-3.</title>
        <authorList>
            <consortium name="US DOE Joint Genome Institute"/>
            <person name="Copeland A."/>
            <person name="Lucas S."/>
            <person name="Lapidus A."/>
            <person name="Barry K."/>
            <person name="Glavina del Rio T."/>
            <person name="Dalin E."/>
            <person name="Tice H."/>
            <person name="Pitluck S."/>
            <person name="Chain P."/>
            <person name="Malfatti S."/>
            <person name="Shin M."/>
            <person name="Vergez L."/>
            <person name="Schmutz J."/>
            <person name="Larimer F."/>
            <person name="Land M."/>
            <person name="Hauser L."/>
            <person name="Kyrpides N."/>
            <person name="Lykidis A."/>
            <person name="Sieprawska-Lupa M."/>
            <person name="Whitman W.B."/>
            <person name="Richardson P."/>
        </authorList>
    </citation>
    <scope>NUCLEOTIDE SEQUENCE [LARGE SCALE GENOMIC DNA]</scope>
    <source>
        <strain>ATCC BAA-1280 / DSM 17508 / OCM 812 / Nankai-3</strain>
    </source>
</reference>
<protein>
    <recommendedName>
        <fullName evidence="1">Elongation factor 2</fullName>
        <shortName evidence="1">EF-2</shortName>
    </recommendedName>
</protein>